<organism>
    <name type="scientific">Pseudomonas aeruginosa (strain ATCC 15692 / DSM 22644 / CIP 104116 / JCM 14847 / LMG 12228 / 1C / PRS 101 / PAO1)</name>
    <dbReference type="NCBI Taxonomy" id="208964"/>
    <lineage>
        <taxon>Bacteria</taxon>
        <taxon>Pseudomonadati</taxon>
        <taxon>Pseudomonadota</taxon>
        <taxon>Gammaproteobacteria</taxon>
        <taxon>Pseudomonadales</taxon>
        <taxon>Pseudomonadaceae</taxon>
        <taxon>Pseudomonas</taxon>
    </lineage>
</organism>
<gene>
    <name evidence="1" type="primary">rplB</name>
    <name type="ordered locus">PA4260</name>
</gene>
<feature type="chain" id="PRO_0000129599" description="Large ribosomal subunit protein uL2">
    <location>
        <begin position="1"/>
        <end position="273"/>
    </location>
</feature>
<feature type="region of interest" description="Disordered" evidence="2">
    <location>
        <begin position="34"/>
        <end position="54"/>
    </location>
</feature>
<feature type="region of interest" description="Disordered" evidence="2">
    <location>
        <begin position="223"/>
        <end position="273"/>
    </location>
</feature>
<evidence type="ECO:0000255" key="1">
    <source>
        <dbReference type="HAMAP-Rule" id="MF_01320"/>
    </source>
</evidence>
<evidence type="ECO:0000256" key="2">
    <source>
        <dbReference type="SAM" id="MobiDB-lite"/>
    </source>
</evidence>
<evidence type="ECO:0000305" key="3"/>
<proteinExistence type="evidence at protein level"/>
<keyword id="KW-0002">3D-structure</keyword>
<keyword id="KW-1185">Reference proteome</keyword>
<keyword id="KW-0687">Ribonucleoprotein</keyword>
<keyword id="KW-0689">Ribosomal protein</keyword>
<keyword id="KW-0694">RNA-binding</keyword>
<keyword id="KW-0699">rRNA-binding</keyword>
<comment type="function">
    <text evidence="1">One of the primary rRNA binding proteins. Required for association of the 30S and 50S subunits to form the 70S ribosome, for tRNA binding and peptide bond formation. It has been suggested to have peptidyltransferase activity; this is somewhat controversial. Makes several contacts with the 16S rRNA in the 70S ribosome.</text>
</comment>
<comment type="subunit">
    <text evidence="1">Part of the 50S ribosomal subunit. Forms a bridge to the 30S subunit in the 70S ribosome.</text>
</comment>
<comment type="similarity">
    <text evidence="1">Belongs to the universal ribosomal protein uL2 family.</text>
</comment>
<accession>Q9HWD8</accession>
<protein>
    <recommendedName>
        <fullName evidence="1">Large ribosomal subunit protein uL2</fullName>
    </recommendedName>
    <alternativeName>
        <fullName evidence="3">50S ribosomal protein L2</fullName>
    </alternativeName>
</protein>
<reference key="1">
    <citation type="journal article" date="2000" name="Nature">
        <title>Complete genome sequence of Pseudomonas aeruginosa PAO1, an opportunistic pathogen.</title>
        <authorList>
            <person name="Stover C.K."/>
            <person name="Pham X.-Q.T."/>
            <person name="Erwin A.L."/>
            <person name="Mizoguchi S.D."/>
            <person name="Warrener P."/>
            <person name="Hickey M.J."/>
            <person name="Brinkman F.S.L."/>
            <person name="Hufnagle W.O."/>
            <person name="Kowalik D.J."/>
            <person name="Lagrou M."/>
            <person name="Garber R.L."/>
            <person name="Goltry L."/>
            <person name="Tolentino E."/>
            <person name="Westbrock-Wadman S."/>
            <person name="Yuan Y."/>
            <person name="Brody L.L."/>
            <person name="Coulter S.N."/>
            <person name="Folger K.R."/>
            <person name="Kas A."/>
            <person name="Larbig K."/>
            <person name="Lim R.M."/>
            <person name="Smith K.A."/>
            <person name="Spencer D.H."/>
            <person name="Wong G.K.-S."/>
            <person name="Wu Z."/>
            <person name="Paulsen I.T."/>
            <person name="Reizer J."/>
            <person name="Saier M.H. Jr."/>
            <person name="Hancock R.E.W."/>
            <person name="Lory S."/>
            <person name="Olson M.V."/>
        </authorList>
    </citation>
    <scope>NUCLEOTIDE SEQUENCE [LARGE SCALE GENOMIC DNA]</scope>
    <source>
        <strain>ATCC 15692 / DSM 22644 / CIP 104116 / JCM 14847 / LMG 12228 / 1C / PRS 101 / PAO1</strain>
    </source>
</reference>
<name>RL2_PSEAE</name>
<dbReference type="EMBL" id="AE004091">
    <property type="protein sequence ID" value="AAG07648.1"/>
    <property type="molecule type" value="Genomic_DNA"/>
</dbReference>
<dbReference type="PIR" id="B83116">
    <property type="entry name" value="B83116"/>
</dbReference>
<dbReference type="RefSeq" id="NP_252950.1">
    <property type="nucleotide sequence ID" value="NC_002516.2"/>
</dbReference>
<dbReference type="RefSeq" id="WP_003103878.1">
    <property type="nucleotide sequence ID" value="NZ_QZGE01000028.1"/>
</dbReference>
<dbReference type="PDB" id="7UNR">
    <property type="method" value="EM"/>
    <property type="resolution" value="2.90 A"/>
    <property type="chains" value="C=1-273"/>
</dbReference>
<dbReference type="PDB" id="7UNU">
    <property type="method" value="EM"/>
    <property type="resolution" value="2.90 A"/>
    <property type="chains" value="C=1-273"/>
</dbReference>
<dbReference type="PDB" id="7UNV">
    <property type="method" value="EM"/>
    <property type="resolution" value="2.70 A"/>
    <property type="chains" value="C=1-273"/>
</dbReference>
<dbReference type="PDB" id="7UNW">
    <property type="method" value="EM"/>
    <property type="resolution" value="2.60 A"/>
    <property type="chains" value="C=1-273"/>
</dbReference>
<dbReference type="PDB" id="8CD1">
    <property type="method" value="EM"/>
    <property type="resolution" value="3.00 A"/>
    <property type="chains" value="C=1-273"/>
</dbReference>
<dbReference type="PDB" id="8RWG">
    <property type="method" value="EM"/>
    <property type="resolution" value="2.46 A"/>
    <property type="chains" value="D=1-273"/>
</dbReference>
<dbReference type="PDBsum" id="7UNR"/>
<dbReference type="PDBsum" id="7UNU"/>
<dbReference type="PDBsum" id="7UNV"/>
<dbReference type="PDBsum" id="7UNW"/>
<dbReference type="PDBsum" id="8CD1"/>
<dbReference type="PDBsum" id="8RWG"/>
<dbReference type="EMDB" id="EMD-16566"/>
<dbReference type="EMDB" id="EMD-19547"/>
<dbReference type="EMDB" id="EMD-26630"/>
<dbReference type="EMDB" id="EMD-26633"/>
<dbReference type="EMDB" id="EMD-26634"/>
<dbReference type="EMDB" id="EMD-26635"/>
<dbReference type="SMR" id="Q9HWD8"/>
<dbReference type="FunCoup" id="Q9HWD8">
    <property type="interactions" value="1088"/>
</dbReference>
<dbReference type="STRING" id="208964.PA4260"/>
<dbReference type="PaxDb" id="208964-PA4260"/>
<dbReference type="DNASU" id="881749"/>
<dbReference type="GeneID" id="77219201"/>
<dbReference type="GeneID" id="881749"/>
<dbReference type="KEGG" id="pae:PA4260"/>
<dbReference type="PATRIC" id="fig|208964.12.peg.4461"/>
<dbReference type="PseudoCAP" id="PA4260"/>
<dbReference type="HOGENOM" id="CLU_036235_2_1_6"/>
<dbReference type="InParanoid" id="Q9HWD8"/>
<dbReference type="OrthoDB" id="9778722at2"/>
<dbReference type="PhylomeDB" id="Q9HWD8"/>
<dbReference type="BioCyc" id="PAER208964:G1FZ6-4333-MONOMER"/>
<dbReference type="PRO" id="PR:Q9HWD8"/>
<dbReference type="Proteomes" id="UP000002438">
    <property type="component" value="Chromosome"/>
</dbReference>
<dbReference type="GO" id="GO:0022625">
    <property type="term" value="C:cytosolic large ribosomal subunit"/>
    <property type="evidence" value="ECO:0000318"/>
    <property type="project" value="GO_Central"/>
</dbReference>
<dbReference type="GO" id="GO:0003723">
    <property type="term" value="F:RNA binding"/>
    <property type="evidence" value="ECO:0000318"/>
    <property type="project" value="GO_Central"/>
</dbReference>
<dbReference type="GO" id="GO:0019843">
    <property type="term" value="F:rRNA binding"/>
    <property type="evidence" value="ECO:0007669"/>
    <property type="project" value="UniProtKB-UniRule"/>
</dbReference>
<dbReference type="GO" id="GO:0003735">
    <property type="term" value="F:structural constituent of ribosome"/>
    <property type="evidence" value="ECO:0000318"/>
    <property type="project" value="GO_Central"/>
</dbReference>
<dbReference type="GO" id="GO:0016740">
    <property type="term" value="F:transferase activity"/>
    <property type="evidence" value="ECO:0007669"/>
    <property type="project" value="InterPro"/>
</dbReference>
<dbReference type="GO" id="GO:0002181">
    <property type="term" value="P:cytoplasmic translation"/>
    <property type="evidence" value="ECO:0000318"/>
    <property type="project" value="GO_Central"/>
</dbReference>
<dbReference type="FunFam" id="2.30.30.30:FF:000001">
    <property type="entry name" value="50S ribosomal protein L2"/>
    <property type="match status" value="1"/>
</dbReference>
<dbReference type="FunFam" id="2.40.50.140:FF:000003">
    <property type="entry name" value="50S ribosomal protein L2"/>
    <property type="match status" value="1"/>
</dbReference>
<dbReference type="FunFam" id="4.10.950.10:FF:000001">
    <property type="entry name" value="50S ribosomal protein L2"/>
    <property type="match status" value="1"/>
</dbReference>
<dbReference type="Gene3D" id="2.30.30.30">
    <property type="match status" value="1"/>
</dbReference>
<dbReference type="Gene3D" id="2.40.50.140">
    <property type="entry name" value="Nucleic acid-binding proteins"/>
    <property type="match status" value="1"/>
</dbReference>
<dbReference type="Gene3D" id="4.10.950.10">
    <property type="entry name" value="Ribosomal protein L2, domain 3"/>
    <property type="match status" value="1"/>
</dbReference>
<dbReference type="HAMAP" id="MF_01320_B">
    <property type="entry name" value="Ribosomal_uL2_B"/>
    <property type="match status" value="1"/>
</dbReference>
<dbReference type="InterPro" id="IPR012340">
    <property type="entry name" value="NA-bd_OB-fold"/>
</dbReference>
<dbReference type="InterPro" id="IPR014722">
    <property type="entry name" value="Rib_uL2_dom2"/>
</dbReference>
<dbReference type="InterPro" id="IPR002171">
    <property type="entry name" value="Ribosomal_uL2"/>
</dbReference>
<dbReference type="InterPro" id="IPR005880">
    <property type="entry name" value="Ribosomal_uL2_bac/org-type"/>
</dbReference>
<dbReference type="InterPro" id="IPR022669">
    <property type="entry name" value="Ribosomal_uL2_C"/>
</dbReference>
<dbReference type="InterPro" id="IPR022671">
    <property type="entry name" value="Ribosomal_uL2_CS"/>
</dbReference>
<dbReference type="InterPro" id="IPR014726">
    <property type="entry name" value="Ribosomal_uL2_dom3"/>
</dbReference>
<dbReference type="InterPro" id="IPR022666">
    <property type="entry name" value="Ribosomal_uL2_RNA-bd_dom"/>
</dbReference>
<dbReference type="InterPro" id="IPR008991">
    <property type="entry name" value="Translation_prot_SH3-like_sf"/>
</dbReference>
<dbReference type="NCBIfam" id="TIGR01171">
    <property type="entry name" value="rplB_bact"/>
    <property type="match status" value="1"/>
</dbReference>
<dbReference type="PANTHER" id="PTHR13691:SF5">
    <property type="entry name" value="LARGE RIBOSOMAL SUBUNIT PROTEIN UL2M"/>
    <property type="match status" value="1"/>
</dbReference>
<dbReference type="PANTHER" id="PTHR13691">
    <property type="entry name" value="RIBOSOMAL PROTEIN L2"/>
    <property type="match status" value="1"/>
</dbReference>
<dbReference type="Pfam" id="PF00181">
    <property type="entry name" value="Ribosomal_L2"/>
    <property type="match status" value="1"/>
</dbReference>
<dbReference type="Pfam" id="PF03947">
    <property type="entry name" value="Ribosomal_L2_C"/>
    <property type="match status" value="1"/>
</dbReference>
<dbReference type="PIRSF" id="PIRSF002158">
    <property type="entry name" value="Ribosomal_L2"/>
    <property type="match status" value="1"/>
</dbReference>
<dbReference type="SMART" id="SM01383">
    <property type="entry name" value="Ribosomal_L2"/>
    <property type="match status" value="1"/>
</dbReference>
<dbReference type="SMART" id="SM01382">
    <property type="entry name" value="Ribosomal_L2_C"/>
    <property type="match status" value="1"/>
</dbReference>
<dbReference type="SUPFAM" id="SSF50249">
    <property type="entry name" value="Nucleic acid-binding proteins"/>
    <property type="match status" value="1"/>
</dbReference>
<dbReference type="SUPFAM" id="SSF50104">
    <property type="entry name" value="Translation proteins SH3-like domain"/>
    <property type="match status" value="1"/>
</dbReference>
<dbReference type="PROSITE" id="PS00467">
    <property type="entry name" value="RIBOSOMAL_L2"/>
    <property type="match status" value="1"/>
</dbReference>
<sequence length="273" mass="29579">MAIVKCKPTSAGRRFVVKVVNQELHKGAPYAPLLEKKSKSGGRNNNGRITTRHIGGGHKQHYRLVDFRRNKDGIPAIVERVEYDPNRTAHIALLKYADGERRYIIAPKGVAAGDQLISGIGAPIKAGNSMPLRNIPVGSTVHGIELKPGKGAQIARSAGASAQLVAREGAYVTLRLRSGEMRKVLAECRATLGEVSNSEHSLRSLGKAGATRWRGVRPTVRGVAMNPVDHPHGGGEGRTSAGRHPVSPWGLQTKGKKTRSNKRTDNMIVRRRK</sequence>